<name>CDHR2_HUMAN</name>
<protein>
    <recommendedName>
        <fullName evidence="16">Cadherin-related family member 2</fullName>
    </recommendedName>
    <alternativeName>
        <fullName evidence="14">Protocadherin LKC</fullName>
        <shortName evidence="14">PC-LKC</shortName>
    </alternativeName>
    <alternativeName>
        <fullName evidence="15">Protocadherin-24</fullName>
    </alternativeName>
</protein>
<comment type="function">
    <text evidence="5 10">Intermicrovillar adhesion molecule that forms, via its extracellular domain, calcium-dependent heterophilic complexes with CDHR5 on adjacent microvilli. Thereby, controls the packing of microvilli at the apical membrane of epithelial cells. Through its cytoplasmic domain, interacts with microvillus cytoplasmic proteins to form the intermicrovillar adhesion complex/IMAC. This complex plays a central role in microvilli and epithelial brush border differentiation (PubMed:24725409). May also play a role in cell-cell adhesion and contact inhibition in epithelial cells (PubMed:12117771).</text>
</comment>
<comment type="subunit">
    <text evidence="5 10 11 12 13">Part of the IMAC/intermicrovillar adhesion complex/intermicrovillar tip-link complex composed of ANKS4B, MYO7B, USH1C, CDHR2 and CDHR5 (PubMed:26812018, PubMed:32209652). Interacts with MAST2 (PubMed:12117771). Interacts (via cytoplasmic domain) with USH1C and MYO7B; required for proper localization of CDHR2 to microvilli tips and its function in brush border differentiation (PubMed:24725409, PubMed:26812017).</text>
</comment>
<comment type="interaction">
    <interactant intactId="EBI-493793">
        <id>Q9BYE9</id>
    </interactant>
    <interactant intactId="EBI-9540729">
        <id>Q9HBB8-1</id>
        <label>CDHR5</label>
    </interactant>
    <organismsDiffer>false</organismsDiffer>
    <experiments>3</experiments>
</comment>
<comment type="interaction">
    <interactant intactId="EBI-493793">
        <id>Q9BYE9</id>
    </interactant>
    <interactant intactId="EBI-9629917">
        <id>Q9HBB8-2</id>
        <label>CDHR5</label>
    </interactant>
    <organismsDiffer>false</organismsDiffer>
    <experiments>3</experiments>
</comment>
<comment type="interaction">
    <interactant intactId="EBI-493793">
        <id>Q9BYE9</id>
    </interactant>
    <interactant intactId="EBI-493777">
        <id>Q6P0Q8</id>
        <label>MAST2</label>
    </interactant>
    <organismsDiffer>false</organismsDiffer>
    <experiments>4</experiments>
</comment>
<comment type="interaction">
    <interactant intactId="EBI-493793">
        <id>Q9BYE9</id>
    </interactant>
    <interactant intactId="EBI-4400912">
        <id>Q6PIF6</id>
        <label>MYO7B</label>
    </interactant>
    <organismsDiffer>false</organismsDiffer>
    <experiments>3</experiments>
</comment>
<comment type="interaction">
    <interactant intactId="EBI-493793">
        <id>Q9BYE9</id>
    </interactant>
    <interactant intactId="EBI-9541226">
        <id>Q9Y6N9-1</id>
        <label>USH1C</label>
    </interactant>
    <organismsDiffer>false</organismsDiffer>
    <experiments>2</experiments>
</comment>
<comment type="subcellular location">
    <subcellularLocation>
        <location evidence="5 10">Apical cell membrane</location>
        <topology evidence="5 10">Single-pass type I membrane protein</topology>
    </subcellularLocation>
    <subcellularLocation>
        <location evidence="5 10 13">Cell projection</location>
        <location evidence="5 10 13">Microvillus membrane</location>
        <topology evidence="5 10">Single-pass type I membrane protein</topology>
    </subcellularLocation>
    <subcellularLocation>
        <location evidence="5">Cell junction</location>
    </subcellularLocation>
</comment>
<comment type="tissue specificity">
    <text evidence="5 8 10">Highly expressed in liver, kidney and colon. Moderately expressed in small intestine. Down-regulated in a number of liver and colon cancers (PubMed:12117771, PubMed:15534908). Expressed in duodenum with higher expression in enterocytes along the villus axis and lower expression in crypts (at protein level) (PubMed:24725409).</text>
</comment>
<comment type="domain">
    <text evidence="10">The cadherin 1 domain is required for binding to CDHR5.</text>
</comment>
<comment type="sequence caution" evidence="16">
    <conflict type="erroneous initiation">
        <sequence resource="EMBL-CDS" id="BAA90962"/>
    </conflict>
    <text>Truncated N-terminus.</text>
</comment>
<comment type="online information" name="Protein Spotlight">
    <link uri="https://www.proteinspotlight.org/back_issues/178/"/>
    <text>A tighter mesh - Issue 178 of April 2016</text>
</comment>
<reference evidence="16 18" key="1">
    <citation type="journal article" date="2002" name="Carcinogenesis">
        <title>Protocadherin LKC, a new candidate for a tumor suppressor of colon and liver cancers, its association with contact inhibition of cell proliferation.</title>
        <authorList>
            <person name="Okazaki N."/>
            <person name="Takahashi N."/>
            <person name="Kojima S."/>
            <person name="Masuho Y."/>
            <person name="Koga H."/>
        </authorList>
    </citation>
    <scope>NUCLEOTIDE SEQUENCE [MRNA]</scope>
    <scope>FUNCTION</scope>
    <scope>TISSUE SPECIFICITY</scope>
    <scope>SUBCELLULAR LOCATION</scope>
    <scope>TOPOLOGY</scope>
    <scope>INTERACTION WITH MAST2</scope>
    <scope>VARIANTS ALA-424 AND MET-1128</scope>
    <source>
        <tissue evidence="18">Kidney</tissue>
    </source>
</reference>
<reference evidence="16 17" key="2">
    <citation type="journal article" date="2004" name="Nat. Genet.">
        <title>Complete sequencing and characterization of 21,243 full-length human cDNAs.</title>
        <authorList>
            <person name="Ota T."/>
            <person name="Suzuki Y."/>
            <person name="Nishikawa T."/>
            <person name="Otsuki T."/>
            <person name="Sugiyama T."/>
            <person name="Irie R."/>
            <person name="Wakamatsu A."/>
            <person name="Hayashi K."/>
            <person name="Sato H."/>
            <person name="Nagai K."/>
            <person name="Kimura K."/>
            <person name="Makita H."/>
            <person name="Sekine M."/>
            <person name="Obayashi M."/>
            <person name="Nishi T."/>
            <person name="Shibahara T."/>
            <person name="Tanaka T."/>
            <person name="Ishii S."/>
            <person name="Yamamoto J."/>
            <person name="Saito K."/>
            <person name="Kawai Y."/>
            <person name="Isono Y."/>
            <person name="Nakamura Y."/>
            <person name="Nagahari K."/>
            <person name="Murakami K."/>
            <person name="Yasuda T."/>
            <person name="Iwayanagi T."/>
            <person name="Wagatsuma M."/>
            <person name="Shiratori A."/>
            <person name="Sudo H."/>
            <person name="Hosoiri T."/>
            <person name="Kaku Y."/>
            <person name="Kodaira H."/>
            <person name="Kondo H."/>
            <person name="Sugawara M."/>
            <person name="Takahashi M."/>
            <person name="Kanda K."/>
            <person name="Yokoi T."/>
            <person name="Furuya T."/>
            <person name="Kikkawa E."/>
            <person name="Omura Y."/>
            <person name="Abe K."/>
            <person name="Kamihara K."/>
            <person name="Katsuta N."/>
            <person name="Sato K."/>
            <person name="Tanikawa M."/>
            <person name="Yamazaki M."/>
            <person name="Ninomiya K."/>
            <person name="Ishibashi T."/>
            <person name="Yamashita H."/>
            <person name="Murakawa K."/>
            <person name="Fujimori K."/>
            <person name="Tanai H."/>
            <person name="Kimata M."/>
            <person name="Watanabe M."/>
            <person name="Hiraoka S."/>
            <person name="Chiba Y."/>
            <person name="Ishida S."/>
            <person name="Ono Y."/>
            <person name="Takiguchi S."/>
            <person name="Watanabe S."/>
            <person name="Yosida M."/>
            <person name="Hotuta T."/>
            <person name="Kusano J."/>
            <person name="Kanehori K."/>
            <person name="Takahashi-Fujii A."/>
            <person name="Hara H."/>
            <person name="Tanase T.-O."/>
            <person name="Nomura Y."/>
            <person name="Togiya S."/>
            <person name="Komai F."/>
            <person name="Hara R."/>
            <person name="Takeuchi K."/>
            <person name="Arita M."/>
            <person name="Imose N."/>
            <person name="Musashino K."/>
            <person name="Yuuki H."/>
            <person name="Oshima A."/>
            <person name="Sasaki N."/>
            <person name="Aotsuka S."/>
            <person name="Yoshikawa Y."/>
            <person name="Matsunawa H."/>
            <person name="Ichihara T."/>
            <person name="Shiohata N."/>
            <person name="Sano S."/>
            <person name="Moriya S."/>
            <person name="Momiyama H."/>
            <person name="Satoh N."/>
            <person name="Takami S."/>
            <person name="Terashima Y."/>
            <person name="Suzuki O."/>
            <person name="Nakagawa S."/>
            <person name="Senoh A."/>
            <person name="Mizoguchi H."/>
            <person name="Goto Y."/>
            <person name="Shimizu F."/>
            <person name="Wakebe H."/>
            <person name="Hishigaki H."/>
            <person name="Watanabe T."/>
            <person name="Sugiyama A."/>
            <person name="Takemoto M."/>
            <person name="Kawakami B."/>
            <person name="Yamazaki M."/>
            <person name="Watanabe K."/>
            <person name="Kumagai A."/>
            <person name="Itakura S."/>
            <person name="Fukuzumi Y."/>
            <person name="Fujimori Y."/>
            <person name="Komiyama M."/>
            <person name="Tashiro H."/>
            <person name="Tanigami A."/>
            <person name="Fujiwara T."/>
            <person name="Ono T."/>
            <person name="Yamada K."/>
            <person name="Fujii Y."/>
            <person name="Ozaki K."/>
            <person name="Hirao M."/>
            <person name="Ohmori Y."/>
            <person name="Kawabata A."/>
            <person name="Hikiji T."/>
            <person name="Kobatake N."/>
            <person name="Inagaki H."/>
            <person name="Ikema Y."/>
            <person name="Okamoto S."/>
            <person name="Okitani R."/>
            <person name="Kawakami T."/>
            <person name="Noguchi S."/>
            <person name="Itoh T."/>
            <person name="Shigeta K."/>
            <person name="Senba T."/>
            <person name="Matsumura K."/>
            <person name="Nakajima Y."/>
            <person name="Mizuno T."/>
            <person name="Morinaga M."/>
            <person name="Sasaki M."/>
            <person name="Togashi T."/>
            <person name="Oyama M."/>
            <person name="Hata H."/>
            <person name="Watanabe M."/>
            <person name="Komatsu T."/>
            <person name="Mizushima-Sugano J."/>
            <person name="Satoh T."/>
            <person name="Shirai Y."/>
            <person name="Takahashi Y."/>
            <person name="Nakagawa K."/>
            <person name="Okumura K."/>
            <person name="Nagase T."/>
            <person name="Nomura N."/>
            <person name="Kikuchi H."/>
            <person name="Masuho Y."/>
            <person name="Yamashita R."/>
            <person name="Nakai K."/>
            <person name="Yada T."/>
            <person name="Nakamura Y."/>
            <person name="Ohara O."/>
            <person name="Isogai T."/>
            <person name="Sugano S."/>
        </authorList>
    </citation>
    <scope>NUCLEOTIDE SEQUENCE [LARGE SCALE MRNA]</scope>
    <scope>VARIANTS ALA-424; MET-1128 AND MET-1164</scope>
    <source>
        <tissue evidence="17">Colon</tissue>
        <tissue>Trachea</tissue>
    </source>
</reference>
<reference key="3">
    <citation type="journal article" date="2004" name="Nature">
        <title>The DNA sequence and comparative analysis of human chromosome 5.</title>
        <authorList>
            <person name="Schmutz J."/>
            <person name="Martin J."/>
            <person name="Terry A."/>
            <person name="Couronne O."/>
            <person name="Grimwood J."/>
            <person name="Lowry S."/>
            <person name="Gordon L.A."/>
            <person name="Scott D."/>
            <person name="Xie G."/>
            <person name="Huang W."/>
            <person name="Hellsten U."/>
            <person name="Tran-Gyamfi M."/>
            <person name="She X."/>
            <person name="Prabhakar S."/>
            <person name="Aerts A."/>
            <person name="Altherr M."/>
            <person name="Bajorek E."/>
            <person name="Black S."/>
            <person name="Branscomb E."/>
            <person name="Caoile C."/>
            <person name="Challacombe J.F."/>
            <person name="Chan Y.M."/>
            <person name="Denys M."/>
            <person name="Detter J.C."/>
            <person name="Escobar J."/>
            <person name="Flowers D."/>
            <person name="Fotopulos D."/>
            <person name="Glavina T."/>
            <person name="Gomez M."/>
            <person name="Gonzales E."/>
            <person name="Goodstein D."/>
            <person name="Grigoriev I."/>
            <person name="Groza M."/>
            <person name="Hammon N."/>
            <person name="Hawkins T."/>
            <person name="Haydu L."/>
            <person name="Israni S."/>
            <person name="Jett J."/>
            <person name="Kadner K."/>
            <person name="Kimball H."/>
            <person name="Kobayashi A."/>
            <person name="Lopez F."/>
            <person name="Lou Y."/>
            <person name="Martinez D."/>
            <person name="Medina C."/>
            <person name="Morgan J."/>
            <person name="Nandkeshwar R."/>
            <person name="Noonan J.P."/>
            <person name="Pitluck S."/>
            <person name="Pollard M."/>
            <person name="Predki P."/>
            <person name="Priest J."/>
            <person name="Ramirez L."/>
            <person name="Retterer J."/>
            <person name="Rodriguez A."/>
            <person name="Rogers S."/>
            <person name="Salamov A."/>
            <person name="Salazar A."/>
            <person name="Thayer N."/>
            <person name="Tice H."/>
            <person name="Tsai M."/>
            <person name="Ustaszewska A."/>
            <person name="Vo N."/>
            <person name="Wheeler J."/>
            <person name="Wu K."/>
            <person name="Yang J."/>
            <person name="Dickson M."/>
            <person name="Cheng J.-F."/>
            <person name="Eichler E.E."/>
            <person name="Olsen A."/>
            <person name="Pennacchio L.A."/>
            <person name="Rokhsar D.S."/>
            <person name="Richardson P."/>
            <person name="Lucas S.M."/>
            <person name="Myers R.M."/>
            <person name="Rubin E.M."/>
        </authorList>
    </citation>
    <scope>NUCLEOTIDE SEQUENCE [LARGE SCALE GENOMIC DNA]</scope>
</reference>
<reference key="4">
    <citation type="journal article" date="2004" name="Genome Res.">
        <title>The status, quality, and expansion of the NIH full-length cDNA project: the Mammalian Gene Collection (MGC).</title>
        <authorList>
            <consortium name="The MGC Project Team"/>
        </authorList>
    </citation>
    <scope>NUCLEOTIDE SEQUENCE [LARGE SCALE MRNA]</scope>
    <scope>VARIANTS ALA-424 AND MET-1128</scope>
</reference>
<reference evidence="16" key="5">
    <citation type="journal article" date="2004" name="World J. Gastroenterol.">
        <title>Differentially expressed genes between solitary large hepatocellular carcinoma and nodular hepatocellular carcinoma.</title>
        <authorList>
            <person name="Yang L.Y."/>
            <person name="Wang W."/>
            <person name="Peng J.X."/>
            <person name="Yang J.Q."/>
            <person name="Huang G.W."/>
        </authorList>
    </citation>
    <scope>TISSUE SPECIFICITY</scope>
</reference>
<reference key="6">
    <citation type="journal article" date="2014" name="Cell">
        <title>Intestinal brush border assembly driven by protocadherin-based intermicrovillar adhesion.</title>
        <authorList>
            <person name="Crawley S.W."/>
            <person name="Shifrin D.A. Jr."/>
            <person name="Grega-Larson N.E."/>
            <person name="McConnell R.E."/>
            <person name="Benesh A.E."/>
            <person name="Mao S."/>
            <person name="Zheng Y."/>
            <person name="Zheng Q.Y."/>
            <person name="Nam K.T."/>
            <person name="Millis B.A."/>
            <person name="Kachar B."/>
            <person name="Tyska M.J."/>
        </authorList>
    </citation>
    <scope>FUNCTION</scope>
    <scope>SUBCELLULAR LOCATION</scope>
    <scope>TOPOLOGY</scope>
    <scope>DOMAIN</scope>
    <scope>INTERACTION WITH MYO7B AND USH1C</scope>
    <scope>MUTAGENESIS OF LEU-1310</scope>
    <scope>REGION</scope>
    <scope>TISSUE SPECIFICITY</scope>
</reference>
<reference key="7">
    <citation type="journal article" date="2014" name="J. Proteomics">
        <title>An enzyme assisted RP-RPLC approach for in-depth analysis of human liver phosphoproteome.</title>
        <authorList>
            <person name="Bian Y."/>
            <person name="Song C."/>
            <person name="Cheng K."/>
            <person name="Dong M."/>
            <person name="Wang F."/>
            <person name="Huang J."/>
            <person name="Sun D."/>
            <person name="Wang L."/>
            <person name="Ye M."/>
            <person name="Zou H."/>
        </authorList>
    </citation>
    <scope>PHOSPHORYLATION [LARGE SCALE ANALYSIS] AT SER-1248</scope>
    <scope>IDENTIFICATION BY MASS SPECTROMETRY [LARGE SCALE ANALYSIS]</scope>
    <source>
        <tissue>Liver</tissue>
    </source>
</reference>
<reference key="8">
    <citation type="journal article" date="2016" name="Dev. Cell">
        <title>Mechanistic basis of organization of the Harmonin/USH1C-mediated brush border microvilli tip-link complex.</title>
        <authorList>
            <person name="Li J."/>
            <person name="He Y."/>
            <person name="Lu Q."/>
            <person name="Zhang M."/>
        </authorList>
    </citation>
    <scope>INTERACTION WITH USH1C</scope>
</reference>
<reference key="9">
    <citation type="journal article" date="2016" name="Dev. Cell">
        <title>ANKS4B is essential for intermicrovillar adhesion complex formation.</title>
        <authorList>
            <person name="Crawley S.W."/>
            <person name="Weck M.L."/>
            <person name="Grega-Larson N.E."/>
            <person name="Shifrin D.A. Jr."/>
            <person name="Tyska M.J."/>
        </authorList>
    </citation>
    <scope>IDENTIFICATION OF THE IMAC COMPLEX</scope>
</reference>
<reference key="10">
    <citation type="journal article" date="2020" name="J. Biol. Chem.">
        <title>The small EF-hand protein CALML4 functions as a critical myosin light chain within the intermicrovillar adhesion complex.</title>
        <authorList>
            <person name="Choi M.S."/>
            <person name="Graves M.J."/>
            <person name="Matoo S."/>
            <person name="Storad Z.A."/>
            <person name="El Sheikh Idris R.A."/>
            <person name="Weck M.L."/>
            <person name="Smith Z.B."/>
            <person name="Tyska M.J."/>
            <person name="Crawley S.W."/>
        </authorList>
    </citation>
    <scope>IDENTIFICATION OF THE IMAC COMPLEX</scope>
    <scope>SUBCELLULAR LOCATION</scope>
</reference>
<reference key="11">
    <citation type="journal article" date="2008" name="Nature">
        <title>DNA sequencing of a cytogenetically normal acute myeloid leukaemia genome.</title>
        <authorList>
            <person name="Ley T.J."/>
            <person name="Mardis E.R."/>
            <person name="Ding L."/>
            <person name="Fulton B."/>
            <person name="McLellan M.D."/>
            <person name="Chen K."/>
            <person name="Dooling D."/>
            <person name="Dunford-Shore B.H."/>
            <person name="McGrath S."/>
            <person name="Hickenbotham M."/>
            <person name="Cook L."/>
            <person name="Abbott R."/>
            <person name="Larson D.E."/>
            <person name="Koboldt D.C."/>
            <person name="Pohl C."/>
            <person name="Smith S."/>
            <person name="Hawkins A."/>
            <person name="Abbott S."/>
            <person name="Locke D."/>
            <person name="Hillier L.W."/>
            <person name="Miner T."/>
            <person name="Fulton L."/>
            <person name="Magrini V."/>
            <person name="Wylie T."/>
            <person name="Glasscock J."/>
            <person name="Conyers J."/>
            <person name="Sander N."/>
            <person name="Shi X."/>
            <person name="Osborne J.R."/>
            <person name="Minx P."/>
            <person name="Gordon D."/>
            <person name="Chinwalla A."/>
            <person name="Zhao Y."/>
            <person name="Ries R.E."/>
            <person name="Payton J.E."/>
            <person name="Westervelt P."/>
            <person name="Tomasson M.H."/>
            <person name="Watson M."/>
            <person name="Baty J."/>
            <person name="Ivanovich J."/>
            <person name="Heath S."/>
            <person name="Shannon W.D."/>
            <person name="Nagarajan R."/>
            <person name="Walter M.J."/>
            <person name="Link D.C."/>
            <person name="Graubert T.A."/>
            <person name="DiPersio J.F."/>
            <person name="Wilson R.K."/>
        </authorList>
    </citation>
    <scope>VARIANT [LARGE SCALE ANALYSIS] LEU-1004</scope>
</reference>
<organism>
    <name type="scientific">Homo sapiens</name>
    <name type="common">Human</name>
    <dbReference type="NCBI Taxonomy" id="9606"/>
    <lineage>
        <taxon>Eukaryota</taxon>
        <taxon>Metazoa</taxon>
        <taxon>Chordata</taxon>
        <taxon>Craniata</taxon>
        <taxon>Vertebrata</taxon>
        <taxon>Euteleostomi</taxon>
        <taxon>Mammalia</taxon>
        <taxon>Eutheria</taxon>
        <taxon>Euarchontoglires</taxon>
        <taxon>Primates</taxon>
        <taxon>Haplorrhini</taxon>
        <taxon>Catarrhini</taxon>
        <taxon>Hominidae</taxon>
        <taxon>Homo</taxon>
    </lineage>
</organism>
<proteinExistence type="evidence at protein level"/>
<sequence length="1310" mass="141543">MAQLWLSCFLLPALVVSVAANVAPKFLANMTSVILPEDLPVGAQAFWLVAEDQDNDPLTYGMSGPNAYFFAVTPKTGEVKLASALDYETLYTFKVTISVSDPYIQVQREMLVIVEDRNDNAPVFQNTAFSTSINETLPVGSVVFSVLAVDKDMGSAGMVVYSIEKVIPSTGDSEHLFRILANGSIVLNGSLSYNNKSAFYQLELKACDLGGMYHNTFTIQCSLPVFLSISVVDQPDLDPQFVREFYSASVAEDAAKGTSVLTVEAVDGDKGINDPVIYSISYSTRPGWFDIGADGVIRVNGSLDREQLLEADEEVQLQVTATETHLNIYGQEAKVSIWVTVRVMDVNDHKPEFYNCSLPACTFTPEEAQVNFTGYVDEHASPRIPIDDLTMVVYDPDKGSNGTFLLSLGGPDAEAFSVSPERAVGSASVQVLVRVSALVDYERQTAMAVQVVATDSVSQNFSVAMVTIHLRDINDHRPTFPQSLYVLTVPEHSATGSVVTDSIHATDPDTGAWGQITYSLLPGNGADLFQVDPVSGTVTVRNGELLDRESQAVYYLTLQATDGGNLSSSTTLQIHLLDINDNAPVVSGSYNIFVQEEEGNVSVTIQAHDNDEPGTNNSRLLFNLLPGPYSHNFSLDPDTGLLRNLGPLDREAIDPALEGRIVLTVLVSDCGEPVLGTKVNVTITVEDINDNLPIFNQSSYNFTVKEEDPGVLVGVVKAWDADQTEANNRISFSLSGSGANYFMIRGLVLGAGWAEGYLRLPPDVSLDYETQPVFNLTVSAENPDPQGGETIVDVCVNVKDVNDNPPTLDVASLRGIRVAENGSQHGQVAVVVASDVDTSAQLEIQLVNILCTKAGVDVGSLCWGWFSVAANGSVYINQSKAIDYEACDLVTLVVRACDLATDPGFQAYSNNGSLLITIEDVNDNAPYFLPENKTFVIIPELVLPNREVASVRARDDDSGNNGVILFSILRVDFISKDGATIPFQGVFSIFTSSEADVFAGSIQPVTSLDSTLQGTYQVTVQARDRPSLGPFLEATTTLNLFTVDQSYRSRLQFSTPKEEVGANRQAINAALTQATRTTVYIVDIQDIDSAARARPHSYLDAYFVFPNGSALTLDELSVMIRNDQDSLTQLLQLGLVVLGSQESQESDLSKQLISVIIGLGVALLLVLVIMTMAFVCVRKSYNRKLQAMKAAKEARKTAAGVMPSAPAIPGTNMYNTERANPMLNLPNKDLGLEYLSPSNDLDSVSVNSLDDNSVDVDKNSQEIKEHRPPHTPPEPDPEPLSVVLLGRQAGASGQLEGPSYTNAGLDTTDL</sequence>
<dbReference type="EMBL" id="AB047004">
    <property type="protein sequence ID" value="BAB40777.1"/>
    <property type="molecule type" value="mRNA"/>
</dbReference>
<dbReference type="EMBL" id="AK000131">
    <property type="protein sequence ID" value="BAA90962.1"/>
    <property type="status" value="ALT_INIT"/>
    <property type="molecule type" value="mRNA"/>
</dbReference>
<dbReference type="EMBL" id="AK315055">
    <property type="protein sequence ID" value="BAG37531.1"/>
    <property type="molecule type" value="mRNA"/>
</dbReference>
<dbReference type="EMBL" id="AC091934">
    <property type="status" value="NOT_ANNOTATED_CDS"/>
    <property type="molecule type" value="Genomic_DNA"/>
</dbReference>
<dbReference type="EMBL" id="BC130282">
    <property type="protein sequence ID" value="AAI30283.1"/>
    <property type="molecule type" value="mRNA"/>
</dbReference>
<dbReference type="CCDS" id="CCDS34297.1"/>
<dbReference type="RefSeq" id="NP_001165447.1">
    <property type="nucleotide sequence ID" value="NM_001171976.2"/>
</dbReference>
<dbReference type="RefSeq" id="NP_060145.3">
    <property type="nucleotide sequence ID" value="NM_017675.4"/>
</dbReference>
<dbReference type="PDB" id="5CZR">
    <property type="method" value="X-ray"/>
    <property type="resolution" value="2.30 A"/>
    <property type="chains" value="A/B/C/D=21-237"/>
</dbReference>
<dbReference type="PDB" id="7N86">
    <property type="method" value="X-ray"/>
    <property type="resolution" value="3.17 A"/>
    <property type="chains" value="A/B/C/D=21-240"/>
</dbReference>
<dbReference type="PDBsum" id="5CZR"/>
<dbReference type="PDBsum" id="7N86"/>
<dbReference type="SMR" id="Q9BYE9"/>
<dbReference type="BioGRID" id="120179">
    <property type="interactions" value="14"/>
</dbReference>
<dbReference type="FunCoup" id="Q9BYE9">
    <property type="interactions" value="58"/>
</dbReference>
<dbReference type="IntAct" id="Q9BYE9">
    <property type="interactions" value="15"/>
</dbReference>
<dbReference type="STRING" id="9606.ENSP00000424565"/>
<dbReference type="MoonDB" id="Q9BYE9">
    <property type="type" value="Predicted"/>
</dbReference>
<dbReference type="GlyConnect" id="1922">
    <property type="glycosylation" value="4 N-Linked glycans (2 sites)"/>
</dbReference>
<dbReference type="GlyCosmos" id="Q9BYE9">
    <property type="glycosylation" value="24 sites, 4 glycans"/>
</dbReference>
<dbReference type="GlyGen" id="Q9BYE9">
    <property type="glycosylation" value="28 sites, 25 N-linked glycans (3 sites), 1 O-linked glycan (3 sites)"/>
</dbReference>
<dbReference type="iPTMnet" id="Q9BYE9"/>
<dbReference type="PhosphoSitePlus" id="Q9BYE9"/>
<dbReference type="BioMuta" id="CDHR2"/>
<dbReference type="DMDM" id="209572658"/>
<dbReference type="jPOST" id="Q9BYE9"/>
<dbReference type="MassIVE" id="Q9BYE9"/>
<dbReference type="PaxDb" id="9606-ENSP00000424565"/>
<dbReference type="PeptideAtlas" id="Q9BYE9"/>
<dbReference type="ProteomicsDB" id="79633"/>
<dbReference type="Antibodypedia" id="2236">
    <property type="antibodies" value="38 antibodies from 10 providers"/>
</dbReference>
<dbReference type="DNASU" id="54825"/>
<dbReference type="Ensembl" id="ENST00000261944.10">
    <property type="protein sequence ID" value="ENSP00000261944.5"/>
    <property type="gene ID" value="ENSG00000074276.11"/>
</dbReference>
<dbReference type="Ensembl" id="ENST00000510636.5">
    <property type="protein sequence ID" value="ENSP00000424565.1"/>
    <property type="gene ID" value="ENSG00000074276.11"/>
</dbReference>
<dbReference type="GeneID" id="54825"/>
<dbReference type="KEGG" id="hsa:54825"/>
<dbReference type="MANE-Select" id="ENST00000261944.10">
    <property type="protein sequence ID" value="ENSP00000261944.5"/>
    <property type="RefSeq nucleotide sequence ID" value="NM_017675.6"/>
    <property type="RefSeq protein sequence ID" value="NP_060145.3"/>
</dbReference>
<dbReference type="UCSC" id="uc003mem.3">
    <property type="organism name" value="human"/>
</dbReference>
<dbReference type="AGR" id="HGNC:18231"/>
<dbReference type="CTD" id="54825"/>
<dbReference type="DisGeNET" id="54825"/>
<dbReference type="GeneCards" id="CDHR2"/>
<dbReference type="HGNC" id="HGNC:18231">
    <property type="gene designation" value="CDHR2"/>
</dbReference>
<dbReference type="HPA" id="ENSG00000074276">
    <property type="expression patterns" value="Tissue enriched (intestine)"/>
</dbReference>
<dbReference type="MIM" id="619713">
    <property type="type" value="gene"/>
</dbReference>
<dbReference type="neXtProt" id="NX_Q9BYE9"/>
<dbReference type="OpenTargets" id="ENSG00000074276"/>
<dbReference type="PharmGKB" id="PA165660231"/>
<dbReference type="VEuPathDB" id="HostDB:ENSG00000074276"/>
<dbReference type="eggNOG" id="KOG3594">
    <property type="taxonomic scope" value="Eukaryota"/>
</dbReference>
<dbReference type="GeneTree" id="ENSGT00940000161160"/>
<dbReference type="HOGENOM" id="CLU_005755_0_0_1"/>
<dbReference type="InParanoid" id="Q9BYE9"/>
<dbReference type="OMA" id="QTVMLVQ"/>
<dbReference type="OrthoDB" id="6491773at2759"/>
<dbReference type="PAN-GO" id="Q9BYE9">
    <property type="GO annotations" value="2 GO annotations based on evolutionary models"/>
</dbReference>
<dbReference type="PhylomeDB" id="Q9BYE9"/>
<dbReference type="TreeFam" id="TF332908"/>
<dbReference type="PathwayCommons" id="Q9BYE9"/>
<dbReference type="SignaLink" id="Q9BYE9"/>
<dbReference type="BioGRID-ORCS" id="54825">
    <property type="hits" value="10 hits in 1143 CRISPR screens"/>
</dbReference>
<dbReference type="ChiTaRS" id="CDHR2">
    <property type="organism name" value="human"/>
</dbReference>
<dbReference type="GeneWiki" id="PCLKC"/>
<dbReference type="GenomeRNAi" id="54825"/>
<dbReference type="Pharos" id="Q9BYE9">
    <property type="development level" value="Tbio"/>
</dbReference>
<dbReference type="PRO" id="PR:Q9BYE9"/>
<dbReference type="Proteomes" id="UP000005640">
    <property type="component" value="Chromosome 5"/>
</dbReference>
<dbReference type="RNAct" id="Q9BYE9">
    <property type="molecule type" value="protein"/>
</dbReference>
<dbReference type="Bgee" id="ENSG00000074276">
    <property type="expression patterns" value="Expressed in jejunal mucosa and 132 other cell types or tissues"/>
</dbReference>
<dbReference type="ExpressionAtlas" id="Q9BYE9">
    <property type="expression patterns" value="baseline and differential"/>
</dbReference>
<dbReference type="GO" id="GO:0070161">
    <property type="term" value="C:anchoring junction"/>
    <property type="evidence" value="ECO:0007669"/>
    <property type="project" value="UniProtKB-SubCell"/>
</dbReference>
<dbReference type="GO" id="GO:0016324">
    <property type="term" value="C:apical plasma membrane"/>
    <property type="evidence" value="ECO:0000314"/>
    <property type="project" value="UniProtKB"/>
</dbReference>
<dbReference type="GO" id="GO:0005903">
    <property type="term" value="C:brush border"/>
    <property type="evidence" value="ECO:0000314"/>
    <property type="project" value="UniProtKB"/>
</dbReference>
<dbReference type="GO" id="GO:0031526">
    <property type="term" value="C:brush border membrane"/>
    <property type="evidence" value="ECO:0000314"/>
    <property type="project" value="UniProtKB"/>
</dbReference>
<dbReference type="GO" id="GO:0070062">
    <property type="term" value="C:extracellular exosome"/>
    <property type="evidence" value="ECO:0007005"/>
    <property type="project" value="UniProtKB"/>
</dbReference>
<dbReference type="GO" id="GO:0005902">
    <property type="term" value="C:microvillus"/>
    <property type="evidence" value="ECO:0000314"/>
    <property type="project" value="UniProtKB"/>
</dbReference>
<dbReference type="GO" id="GO:0031528">
    <property type="term" value="C:microvillus membrane"/>
    <property type="evidence" value="ECO:0000314"/>
    <property type="project" value="UniProtKB"/>
</dbReference>
<dbReference type="GO" id="GO:0005886">
    <property type="term" value="C:plasma membrane"/>
    <property type="evidence" value="ECO:0000314"/>
    <property type="project" value="UniProtKB"/>
</dbReference>
<dbReference type="GO" id="GO:0005509">
    <property type="term" value="F:calcium ion binding"/>
    <property type="evidence" value="ECO:0007669"/>
    <property type="project" value="InterPro"/>
</dbReference>
<dbReference type="GO" id="GO:0050839">
    <property type="term" value="F:cell adhesion molecule binding"/>
    <property type="evidence" value="ECO:0000314"/>
    <property type="project" value="UniProtKB"/>
</dbReference>
<dbReference type="GO" id="GO:1904970">
    <property type="term" value="P:brush border assembly"/>
    <property type="evidence" value="ECO:0000314"/>
    <property type="project" value="UniProtKB"/>
</dbReference>
<dbReference type="GO" id="GO:0044331">
    <property type="term" value="P:cell-cell adhesion mediated by cadherin"/>
    <property type="evidence" value="ECO:0000314"/>
    <property type="project" value="UniProtKB"/>
</dbReference>
<dbReference type="GO" id="GO:0030855">
    <property type="term" value="P:epithelial cell differentiation"/>
    <property type="evidence" value="ECO:0000314"/>
    <property type="project" value="UniProtKB"/>
</dbReference>
<dbReference type="GO" id="GO:0007156">
    <property type="term" value="P:homophilic cell adhesion via plasma membrane adhesion molecules"/>
    <property type="evidence" value="ECO:0007669"/>
    <property type="project" value="InterPro"/>
</dbReference>
<dbReference type="GO" id="GO:0090675">
    <property type="term" value="P:intermicrovillar adhesion"/>
    <property type="evidence" value="ECO:0000315"/>
    <property type="project" value="UniProtKB"/>
</dbReference>
<dbReference type="GO" id="GO:0060243">
    <property type="term" value="P:negative regulation of cell growth involved in contact inhibition"/>
    <property type="evidence" value="ECO:0000314"/>
    <property type="project" value="UniProtKB"/>
</dbReference>
<dbReference type="GO" id="GO:0032532">
    <property type="term" value="P:regulation of microvillus length"/>
    <property type="evidence" value="ECO:0000315"/>
    <property type="project" value="UniProtKB"/>
</dbReference>
<dbReference type="CDD" id="cd11304">
    <property type="entry name" value="Cadherin_repeat"/>
    <property type="match status" value="9"/>
</dbReference>
<dbReference type="FunFam" id="2.60.40.60:FF:000221">
    <property type="entry name" value="Cadherin related family member 2"/>
    <property type="match status" value="1"/>
</dbReference>
<dbReference type="FunFam" id="2.60.40.60:FF:000245">
    <property type="entry name" value="Cadherin related family member 2"/>
    <property type="match status" value="1"/>
</dbReference>
<dbReference type="FunFam" id="2.60.40.60:FF:000252">
    <property type="entry name" value="Cadherin related family member 2"/>
    <property type="match status" value="1"/>
</dbReference>
<dbReference type="FunFam" id="2.60.40.60:FF:000098">
    <property type="entry name" value="cadherin-23 isoform X1"/>
    <property type="match status" value="1"/>
</dbReference>
<dbReference type="FunFam" id="2.60.40.60:FF:000168">
    <property type="entry name" value="Cadherin-related family member 2"/>
    <property type="match status" value="1"/>
</dbReference>
<dbReference type="FunFam" id="2.60.40.60:FF:000264">
    <property type="entry name" value="Cadherin-related family member 2"/>
    <property type="match status" value="1"/>
</dbReference>
<dbReference type="FunFam" id="2.60.40.60:FF:000101">
    <property type="entry name" value="FAT atypical cadherin 4"/>
    <property type="match status" value="1"/>
</dbReference>
<dbReference type="FunFam" id="2.60.40.60:FF:000094">
    <property type="entry name" value="protocadherin gamma-C4 isoform X2"/>
    <property type="match status" value="2"/>
</dbReference>
<dbReference type="Gene3D" id="2.60.40.60">
    <property type="entry name" value="Cadherins"/>
    <property type="match status" value="9"/>
</dbReference>
<dbReference type="InterPro" id="IPR002126">
    <property type="entry name" value="Cadherin-like_dom"/>
</dbReference>
<dbReference type="InterPro" id="IPR015919">
    <property type="entry name" value="Cadherin-like_sf"/>
</dbReference>
<dbReference type="InterPro" id="IPR020894">
    <property type="entry name" value="Cadherin_CS"/>
</dbReference>
<dbReference type="PANTHER" id="PTHR24026:SF133">
    <property type="entry name" value="CADHERIN-RELATED FAMILY MEMBER 2"/>
    <property type="match status" value="1"/>
</dbReference>
<dbReference type="PANTHER" id="PTHR24026">
    <property type="entry name" value="FAT ATYPICAL CADHERIN-RELATED"/>
    <property type="match status" value="1"/>
</dbReference>
<dbReference type="Pfam" id="PF00028">
    <property type="entry name" value="Cadherin"/>
    <property type="match status" value="7"/>
</dbReference>
<dbReference type="PRINTS" id="PR00205">
    <property type="entry name" value="CADHERIN"/>
</dbReference>
<dbReference type="SMART" id="SM00112">
    <property type="entry name" value="CA"/>
    <property type="match status" value="9"/>
</dbReference>
<dbReference type="SUPFAM" id="SSF49313">
    <property type="entry name" value="Cadherin-like"/>
    <property type="match status" value="9"/>
</dbReference>
<dbReference type="PROSITE" id="PS00232">
    <property type="entry name" value="CADHERIN_1"/>
    <property type="match status" value="7"/>
</dbReference>
<dbReference type="PROSITE" id="PS50268">
    <property type="entry name" value="CADHERIN_2"/>
    <property type="match status" value="9"/>
</dbReference>
<gene>
    <name evidence="19" type="primary">CDHR2</name>
    <name evidence="15" type="synonym">PCDH24</name>
    <name evidence="14" type="synonym">PCLKC</name>
</gene>
<evidence type="ECO:0000250" key="1">
    <source>
        <dbReference type="UniProtKB" id="E9Q7P9"/>
    </source>
</evidence>
<evidence type="ECO:0000255" key="2"/>
<evidence type="ECO:0000255" key="3">
    <source>
        <dbReference type="PROSITE-ProRule" id="PRU00043"/>
    </source>
</evidence>
<evidence type="ECO:0000256" key="4">
    <source>
        <dbReference type="SAM" id="MobiDB-lite"/>
    </source>
</evidence>
<evidence type="ECO:0000269" key="5">
    <source>
    </source>
</evidence>
<evidence type="ECO:0000269" key="6">
    <source>
    </source>
</evidence>
<evidence type="ECO:0000269" key="7">
    <source>
    </source>
</evidence>
<evidence type="ECO:0000269" key="8">
    <source>
    </source>
</evidence>
<evidence type="ECO:0000269" key="9">
    <source>
    </source>
</evidence>
<evidence type="ECO:0000269" key="10">
    <source>
    </source>
</evidence>
<evidence type="ECO:0000269" key="11">
    <source>
    </source>
</evidence>
<evidence type="ECO:0000269" key="12">
    <source>
    </source>
</evidence>
<evidence type="ECO:0000269" key="13">
    <source>
    </source>
</evidence>
<evidence type="ECO:0000303" key="14">
    <source>
    </source>
</evidence>
<evidence type="ECO:0000303" key="15">
    <source>
    </source>
</evidence>
<evidence type="ECO:0000305" key="16"/>
<evidence type="ECO:0000312" key="17">
    <source>
        <dbReference type="EMBL" id="BAA90962.1"/>
    </source>
</evidence>
<evidence type="ECO:0000312" key="18">
    <source>
        <dbReference type="EMBL" id="BAB40777.1"/>
    </source>
</evidence>
<evidence type="ECO:0000312" key="19">
    <source>
        <dbReference type="HGNC" id="HGNC:18231"/>
    </source>
</evidence>
<evidence type="ECO:0007744" key="20">
    <source>
    </source>
</evidence>
<evidence type="ECO:0007829" key="21">
    <source>
        <dbReference type="PDB" id="5CZR"/>
    </source>
</evidence>
<evidence type="ECO:0007829" key="22">
    <source>
        <dbReference type="PDB" id="7N86"/>
    </source>
</evidence>
<keyword id="KW-0002">3D-structure</keyword>
<keyword id="KW-0106">Calcium</keyword>
<keyword id="KW-0130">Cell adhesion</keyword>
<keyword id="KW-0965">Cell junction</keyword>
<keyword id="KW-1003">Cell membrane</keyword>
<keyword id="KW-0966">Cell projection</keyword>
<keyword id="KW-0221">Differentiation</keyword>
<keyword id="KW-0325">Glycoprotein</keyword>
<keyword id="KW-0472">Membrane</keyword>
<keyword id="KW-0597">Phosphoprotein</keyword>
<keyword id="KW-1267">Proteomics identification</keyword>
<keyword id="KW-1185">Reference proteome</keyword>
<keyword id="KW-0677">Repeat</keyword>
<keyword id="KW-0732">Signal</keyword>
<keyword id="KW-0812">Transmembrane</keyword>
<keyword id="KW-1133">Transmembrane helix</keyword>
<accession>Q9BYE9</accession>
<accession>A1L3U4</accession>
<accession>A6NC80</accession>
<accession>Q9NXP8</accession>
<feature type="signal peptide" evidence="2">
    <location>
        <begin position="1"/>
        <end position="20"/>
    </location>
</feature>
<feature type="chain" id="PRO_0000004011" description="Cadherin-related family member 2">
    <location>
        <begin position="21"/>
        <end position="1310"/>
    </location>
</feature>
<feature type="topological domain" description="Extracellular" evidence="2">
    <location>
        <begin position="21"/>
        <end position="1154"/>
    </location>
</feature>
<feature type="transmembrane region" description="Helical" evidence="2">
    <location>
        <begin position="1155"/>
        <end position="1175"/>
    </location>
</feature>
<feature type="topological domain" description="Cytoplasmic" evidence="2">
    <location>
        <begin position="1176"/>
        <end position="1310"/>
    </location>
</feature>
<feature type="domain" description="Cadherin 1" evidence="3">
    <location>
        <begin position="27"/>
        <end position="124"/>
    </location>
</feature>
<feature type="domain" description="Cadherin 2" evidence="3">
    <location>
        <begin position="125"/>
        <end position="241"/>
    </location>
</feature>
<feature type="domain" description="Cadherin 3" evidence="3">
    <location>
        <begin position="242"/>
        <end position="353"/>
    </location>
</feature>
<feature type="domain" description="Cadherin 4" evidence="3">
    <location>
        <begin position="368"/>
        <end position="480"/>
    </location>
</feature>
<feature type="domain" description="Cadherin 5" evidence="3">
    <location>
        <begin position="481"/>
        <end position="586"/>
    </location>
</feature>
<feature type="domain" description="Cadherin 6" evidence="3">
    <location>
        <begin position="586"/>
        <end position="695"/>
    </location>
</feature>
<feature type="domain" description="Cadherin 7" evidence="3">
    <location>
        <begin position="696"/>
        <end position="808"/>
    </location>
</feature>
<feature type="domain" description="Cadherin 8" evidence="3">
    <location>
        <begin position="810"/>
        <end position="928"/>
    </location>
</feature>
<feature type="domain" description="Cadherin 9" evidence="3">
    <location>
        <begin position="930"/>
        <end position="1058"/>
    </location>
</feature>
<feature type="region of interest" description="Mediates interaction with USH1C and MYO7B and is required for proper localization to microvilli tips and function in microvilli organization" evidence="10">
    <location>
        <begin position="1180"/>
        <end position="1310"/>
    </location>
</feature>
<feature type="region of interest" description="Disordered" evidence="4">
    <location>
        <begin position="1259"/>
        <end position="1310"/>
    </location>
</feature>
<feature type="compositionally biased region" description="Basic and acidic residues" evidence="4">
    <location>
        <begin position="1259"/>
        <end position="1268"/>
    </location>
</feature>
<feature type="compositionally biased region" description="Polar residues" evidence="4">
    <location>
        <begin position="1299"/>
        <end position="1310"/>
    </location>
</feature>
<feature type="modified residue" description="Phosphoserine" evidence="20">
    <location>
        <position position="1248"/>
    </location>
</feature>
<feature type="modified residue" description="Phosphoserine" evidence="1">
    <location>
        <position position="1299"/>
    </location>
</feature>
<feature type="glycosylation site" description="N-linked (GlcNAc...) asparagine" evidence="2">
    <location>
        <position position="29"/>
    </location>
</feature>
<feature type="glycosylation site" description="N-linked (GlcNAc...) asparagine" evidence="2">
    <location>
        <position position="134"/>
    </location>
</feature>
<feature type="glycosylation site" description="N-linked (GlcNAc...) asparagine" evidence="2">
    <location>
        <position position="182"/>
    </location>
</feature>
<feature type="glycosylation site" description="N-linked (GlcNAc...) asparagine" evidence="2">
    <location>
        <position position="188"/>
    </location>
</feature>
<feature type="glycosylation site" description="N-linked (GlcNAc...) asparagine" evidence="2">
    <location>
        <position position="195"/>
    </location>
</feature>
<feature type="glycosylation site" description="N-linked (GlcNAc...) asparagine" evidence="2">
    <location>
        <position position="300"/>
    </location>
</feature>
<feature type="glycosylation site" description="N-linked (GlcNAc...) asparagine" evidence="2">
    <location>
        <position position="355"/>
    </location>
</feature>
<feature type="glycosylation site" description="N-linked (GlcNAc...) asparagine" evidence="2">
    <location>
        <position position="371"/>
    </location>
</feature>
<feature type="glycosylation site" description="N-linked (GlcNAc...) asparagine" evidence="2">
    <location>
        <position position="401"/>
    </location>
</feature>
<feature type="glycosylation site" description="N-linked (GlcNAc...) asparagine" evidence="2">
    <location>
        <position position="460"/>
    </location>
</feature>
<feature type="glycosylation site" description="N-linked (GlcNAc...) asparagine" evidence="2">
    <location>
        <position position="565"/>
    </location>
</feature>
<feature type="glycosylation site" description="N-linked (GlcNAc...) asparagine" evidence="2">
    <location>
        <position position="600"/>
    </location>
</feature>
<feature type="glycosylation site" description="N-linked (GlcNAc...) asparagine" evidence="2">
    <location>
        <position position="616"/>
    </location>
</feature>
<feature type="glycosylation site" description="N-linked (GlcNAc...) asparagine" evidence="2">
    <location>
        <position position="632"/>
    </location>
</feature>
<feature type="glycosylation site" description="N-linked (GlcNAc...) asparagine" evidence="2">
    <location>
        <position position="680"/>
    </location>
</feature>
<feature type="glycosylation site" description="N-linked (GlcNAc...) asparagine" evidence="2">
    <location>
        <position position="696"/>
    </location>
</feature>
<feature type="glycosylation site" description="N-linked (GlcNAc...) asparagine" evidence="2">
    <location>
        <position position="701"/>
    </location>
</feature>
<feature type="glycosylation site" description="N-linked (GlcNAc...) asparagine" evidence="2">
    <location>
        <position position="775"/>
    </location>
</feature>
<feature type="glycosylation site" description="N-linked (GlcNAc...) asparagine" evidence="2">
    <location>
        <position position="821"/>
    </location>
</feature>
<feature type="glycosylation site" description="N-linked (GlcNAc...) asparagine" evidence="2">
    <location>
        <position position="871"/>
    </location>
</feature>
<feature type="glycosylation site" description="N-linked (GlcNAc...) asparagine" evidence="2">
    <location>
        <position position="877"/>
    </location>
</feature>
<feature type="glycosylation site" description="N-linked (GlcNAc...) asparagine" evidence="2">
    <location>
        <position position="911"/>
    </location>
</feature>
<feature type="glycosylation site" description="N-linked (GlcNAc...) asparagine" evidence="2">
    <location>
        <position position="932"/>
    </location>
</feature>
<feature type="glycosylation site" description="N-linked (GlcNAc...) asparagine" evidence="2">
    <location>
        <position position="1107"/>
    </location>
</feature>
<feature type="sequence variant" id="VAR_046695" description="In dbSNP:rs6886860.">
    <original>Q</original>
    <variation>H</variation>
    <location>
        <position position="107"/>
    </location>
</feature>
<feature type="sequence variant" id="VAR_046696" description="In dbSNP:rs3762960.">
    <original>A</original>
    <variation>G</variation>
    <location>
        <position position="415"/>
    </location>
</feature>
<feature type="sequence variant" id="VAR_046697" description="In dbSNP:rs11134982." evidence="5 6 7">
    <original>V</original>
    <variation>A</variation>
    <location>
        <position position="424"/>
    </location>
</feature>
<feature type="sequence variant" id="VAR_046698" description="In dbSNP:rs752138.">
    <original>L</original>
    <variation>P</variation>
    <location>
        <position position="766"/>
    </location>
</feature>
<feature type="sequence variant" id="VAR_046699" description="In dbSNP:rs35018750.">
    <original>T</original>
    <variation>M</variation>
    <location>
        <position position="901"/>
    </location>
</feature>
<feature type="sequence variant" id="VAR_046700" description="In dbSNP:rs3749625.">
    <original>V</original>
    <variation>M</variation>
    <location>
        <position position="948"/>
    </location>
</feature>
<feature type="sequence variant" id="VAR_054148" description="Found in an acute myeloid leukemia sample; somatic mutation; dbSNP:rs371676123." evidence="9">
    <original>P</original>
    <variation>L</variation>
    <location>
        <position position="1004"/>
    </location>
</feature>
<feature type="sequence variant" id="VAR_046701" description="In dbSNP:rs2291442." evidence="5 6 7">
    <original>T</original>
    <variation>M</variation>
    <location>
        <position position="1128"/>
    </location>
</feature>
<feature type="sequence variant" id="VAR_021548" description="In dbSNP:rs17078347." evidence="6">
    <original>L</original>
    <variation>M</variation>
    <location>
        <position position="1164"/>
    </location>
</feature>
<feature type="mutagenesis site" description="Loss of interaction with USH1C." evidence="10">
    <original>L</original>
    <variation>R</variation>
    <location>
        <position position="1310"/>
    </location>
</feature>
<feature type="sequence conflict" description="In Ref. 1; BAB40777." evidence="16" ref="1">
    <original>G</original>
    <variation>S</variation>
    <location>
        <position position="64"/>
    </location>
</feature>
<feature type="sequence conflict" description="In Ref. 2; BAA90962." evidence="16" ref="2">
    <original>D</original>
    <variation>G</variation>
    <location>
        <position position="1229"/>
    </location>
</feature>
<feature type="helix" evidence="21">
    <location>
        <begin position="28"/>
        <end position="31"/>
    </location>
</feature>
<feature type="strand" evidence="21">
    <location>
        <begin position="32"/>
        <end position="36"/>
    </location>
</feature>
<feature type="strand" evidence="21">
    <location>
        <begin position="43"/>
        <end position="47"/>
    </location>
</feature>
<feature type="strand" evidence="21">
    <location>
        <begin position="59"/>
        <end position="64"/>
    </location>
</feature>
<feature type="helix" evidence="21">
    <location>
        <begin position="67"/>
        <end position="69"/>
    </location>
</feature>
<feature type="strand" evidence="21">
    <location>
        <begin position="70"/>
        <end position="72"/>
    </location>
</feature>
<feature type="turn" evidence="21">
    <location>
        <begin position="74"/>
        <end position="76"/>
    </location>
</feature>
<feature type="strand" evidence="21">
    <location>
        <begin position="78"/>
        <end position="81"/>
    </location>
</feature>
<feature type="turn" evidence="21">
    <location>
        <begin position="87"/>
        <end position="89"/>
    </location>
</feature>
<feature type="strand" evidence="21">
    <location>
        <begin position="91"/>
        <end position="100"/>
    </location>
</feature>
<feature type="strand" evidence="21">
    <location>
        <begin position="105"/>
        <end position="115"/>
    </location>
</feature>
<feature type="strand" evidence="22">
    <location>
        <begin position="123"/>
        <end position="125"/>
    </location>
</feature>
<feature type="strand" evidence="21">
    <location>
        <begin position="130"/>
        <end position="134"/>
    </location>
</feature>
<feature type="strand" evidence="21">
    <location>
        <begin position="142"/>
        <end position="145"/>
    </location>
</feature>
<feature type="helix" evidence="21">
    <location>
        <begin position="154"/>
        <end position="157"/>
    </location>
</feature>
<feature type="strand" evidence="21">
    <location>
        <begin position="159"/>
        <end position="168"/>
    </location>
</feature>
<feature type="strand" evidence="21">
    <location>
        <begin position="170"/>
        <end position="172"/>
    </location>
</feature>
<feature type="helix" evidence="21">
    <location>
        <begin position="173"/>
        <end position="175"/>
    </location>
</feature>
<feature type="strand" evidence="21">
    <location>
        <begin position="176"/>
        <end position="179"/>
    </location>
</feature>
<feature type="strand" evidence="21">
    <location>
        <begin position="183"/>
        <end position="187"/>
    </location>
</feature>
<feature type="turn" evidence="21">
    <location>
        <begin position="193"/>
        <end position="196"/>
    </location>
</feature>
<feature type="strand" evidence="21">
    <location>
        <begin position="198"/>
        <end position="208"/>
    </location>
</feature>
<feature type="strand" evidence="21">
    <location>
        <begin position="211"/>
        <end position="213"/>
    </location>
</feature>
<feature type="strand" evidence="21">
    <location>
        <begin position="216"/>
        <end position="218"/>
    </location>
</feature>
<feature type="strand" evidence="21">
    <location>
        <begin position="225"/>
        <end position="232"/>
    </location>
</feature>